<dbReference type="EMBL" id="BC074638">
    <property type="protein sequence ID" value="AAH74638.1"/>
    <property type="molecule type" value="mRNA"/>
</dbReference>
<dbReference type="RefSeq" id="NP_001005640.1">
    <property type="nucleotide sequence ID" value="NM_001005640.1"/>
</dbReference>
<dbReference type="SMR" id="Q6GL68"/>
<dbReference type="FunCoup" id="Q6GL68">
    <property type="interactions" value="3506"/>
</dbReference>
<dbReference type="STRING" id="8364.ENSXETP00000049874"/>
<dbReference type="PaxDb" id="8364-ENSXETP00000045614"/>
<dbReference type="DNASU" id="448107"/>
<dbReference type="GeneID" id="448107"/>
<dbReference type="KEGG" id="xtr:448107"/>
<dbReference type="AGR" id="Xenbase:XB-GENE-1031985"/>
<dbReference type="CTD" id="83439"/>
<dbReference type="Xenbase" id="XB-GENE-1031985">
    <property type="gene designation" value="tcf7l1"/>
</dbReference>
<dbReference type="eggNOG" id="KOG3248">
    <property type="taxonomic scope" value="Eukaryota"/>
</dbReference>
<dbReference type="HOGENOM" id="CLU_013229_4_0_1"/>
<dbReference type="InParanoid" id="Q6GL68"/>
<dbReference type="OMA" id="HPLSWLV"/>
<dbReference type="OrthoDB" id="2307332at2759"/>
<dbReference type="PhylomeDB" id="Q6GL68"/>
<dbReference type="TreeFam" id="TF318448"/>
<dbReference type="Reactome" id="R-XTR-9825892">
    <property type="pathway name" value="Regulation of MITF-M-dependent genes involved in cell cycle and proliferation"/>
</dbReference>
<dbReference type="Proteomes" id="UP000008143">
    <property type="component" value="Chromosome 3"/>
</dbReference>
<dbReference type="Bgee" id="ENSXETG00000019015">
    <property type="expression patterns" value="Expressed in gastrula and 14 other cell types or tissues"/>
</dbReference>
<dbReference type="GO" id="GO:0005634">
    <property type="term" value="C:nucleus"/>
    <property type="evidence" value="ECO:0007669"/>
    <property type="project" value="UniProtKB-SubCell"/>
</dbReference>
<dbReference type="GO" id="GO:0005667">
    <property type="term" value="C:transcription regulator complex"/>
    <property type="evidence" value="ECO:0000250"/>
    <property type="project" value="UniProtKB"/>
</dbReference>
<dbReference type="GO" id="GO:0003677">
    <property type="term" value="F:DNA binding"/>
    <property type="evidence" value="ECO:0007669"/>
    <property type="project" value="UniProtKB-KW"/>
</dbReference>
<dbReference type="GO" id="GO:0140297">
    <property type="term" value="F:DNA-binding transcription factor binding"/>
    <property type="evidence" value="ECO:0000250"/>
    <property type="project" value="UniProtKB"/>
</dbReference>
<dbReference type="GO" id="GO:0016055">
    <property type="term" value="P:Wnt signaling pathway"/>
    <property type="evidence" value="ECO:0007669"/>
    <property type="project" value="UniProtKB-KW"/>
</dbReference>
<dbReference type="CDD" id="cd21996">
    <property type="entry name" value="HMG-box_TCF7-like"/>
    <property type="match status" value="1"/>
</dbReference>
<dbReference type="FunFam" id="1.10.30.10:FF:000001">
    <property type="entry name" value="transcription factor 7 isoform X2"/>
    <property type="match status" value="1"/>
</dbReference>
<dbReference type="FunFam" id="4.10.900.10:FF:000002">
    <property type="entry name" value="transcription factor 7-like 2 isoform X1"/>
    <property type="match status" value="1"/>
</dbReference>
<dbReference type="Gene3D" id="1.10.30.10">
    <property type="entry name" value="High mobility group box domain"/>
    <property type="match status" value="1"/>
</dbReference>
<dbReference type="Gene3D" id="4.10.900.10">
    <property type="entry name" value="TCF3-CBD (Catenin binding domain)"/>
    <property type="match status" value="1"/>
</dbReference>
<dbReference type="InterPro" id="IPR027397">
    <property type="entry name" value="Catenin-bd_sf"/>
</dbReference>
<dbReference type="InterPro" id="IPR013558">
    <property type="entry name" value="CTNNB1-bd_N"/>
</dbReference>
<dbReference type="InterPro" id="IPR009071">
    <property type="entry name" value="HMG_box_dom"/>
</dbReference>
<dbReference type="InterPro" id="IPR036910">
    <property type="entry name" value="HMG_box_dom_sf"/>
</dbReference>
<dbReference type="InterPro" id="IPR024940">
    <property type="entry name" value="TCF/LEF"/>
</dbReference>
<dbReference type="PANTHER" id="PTHR10373">
    <property type="entry name" value="TRANSCRIPTION FACTOR 7 FAMILY MEMBER"/>
    <property type="match status" value="1"/>
</dbReference>
<dbReference type="PANTHER" id="PTHR10373:SF25">
    <property type="entry name" value="TRANSCRIPTION FACTOR 7-LIKE 1"/>
    <property type="match status" value="1"/>
</dbReference>
<dbReference type="Pfam" id="PF08347">
    <property type="entry name" value="CTNNB1_binding"/>
    <property type="match status" value="1"/>
</dbReference>
<dbReference type="Pfam" id="PF00505">
    <property type="entry name" value="HMG_box"/>
    <property type="match status" value="1"/>
</dbReference>
<dbReference type="SMART" id="SM00398">
    <property type="entry name" value="HMG"/>
    <property type="match status" value="1"/>
</dbReference>
<dbReference type="SUPFAM" id="SSF47095">
    <property type="entry name" value="HMG-box"/>
    <property type="match status" value="1"/>
</dbReference>
<dbReference type="PROSITE" id="PS50118">
    <property type="entry name" value="HMG_BOX_2"/>
    <property type="match status" value="1"/>
</dbReference>
<protein>
    <recommendedName>
        <fullName>Transcription factor 7-like 1</fullName>
    </recommendedName>
    <alternativeName>
        <fullName>HMG box transcription factor 3</fullName>
        <shortName>TCF-3</shortName>
    </alternativeName>
</protein>
<accession>Q6GL68</accession>
<keyword id="KW-0010">Activator</keyword>
<keyword id="KW-0217">Developmental protein</keyword>
<keyword id="KW-0238">DNA-binding</keyword>
<keyword id="KW-0539">Nucleus</keyword>
<keyword id="KW-1185">Reference proteome</keyword>
<keyword id="KW-0678">Repressor</keyword>
<keyword id="KW-0804">Transcription</keyword>
<keyword id="KW-0805">Transcription regulation</keyword>
<keyword id="KW-0879">Wnt signaling pathway</keyword>
<reference key="1">
    <citation type="submission" date="2004-06" db="EMBL/GenBank/DDBJ databases">
        <authorList>
            <consortium name="NIH - Xenopus Gene Collection (XGC) project"/>
        </authorList>
    </citation>
    <scope>NUCLEOTIDE SEQUENCE [LARGE SCALE MRNA]</scope>
    <source>
        <tissue>Embryo</tissue>
    </source>
</reference>
<gene>
    <name type="primary">tcf7l1</name>
    <name type="synonym">tcf3</name>
</gene>
<feature type="chain" id="PRO_0000048620" description="Transcription factor 7-like 1">
    <location>
        <begin position="1"/>
        <end position="553"/>
    </location>
</feature>
<feature type="DNA-binding region" description="HMG box" evidence="2">
    <location>
        <begin position="324"/>
        <end position="392"/>
    </location>
</feature>
<feature type="region of interest" description="Disordered" evidence="3">
    <location>
        <begin position="1"/>
        <end position="77"/>
    </location>
</feature>
<feature type="region of interest" description="Interaction with CTNNB1" evidence="1">
    <location>
        <begin position="1"/>
        <end position="61"/>
    </location>
</feature>
<feature type="region of interest" description="Interaction with AES and TLE4" evidence="1">
    <location>
        <begin position="109"/>
        <end position="312"/>
    </location>
</feature>
<feature type="region of interest" description="Disordered" evidence="3">
    <location>
        <begin position="183"/>
        <end position="213"/>
    </location>
</feature>
<feature type="region of interest" description="Disordered" evidence="3">
    <location>
        <begin position="392"/>
        <end position="474"/>
    </location>
</feature>
<feature type="region of interest" description="Interaction with CTBP" evidence="1">
    <location>
        <begin position="408"/>
        <end position="553"/>
    </location>
</feature>
<feature type="compositionally biased region" description="Gly residues" evidence="3">
    <location>
        <begin position="1"/>
        <end position="11"/>
    </location>
</feature>
<feature type="compositionally biased region" description="Basic and acidic residues" evidence="3">
    <location>
        <begin position="17"/>
        <end position="32"/>
    </location>
</feature>
<feature type="compositionally biased region" description="Basic and acidic residues" evidence="3">
    <location>
        <begin position="52"/>
        <end position="77"/>
    </location>
</feature>
<feature type="compositionally biased region" description="Basic and acidic residues" evidence="3">
    <location>
        <begin position="407"/>
        <end position="416"/>
    </location>
</feature>
<feature type="compositionally biased region" description="Low complexity" evidence="3">
    <location>
        <begin position="444"/>
        <end position="463"/>
    </location>
</feature>
<feature type="compositionally biased region" description="Polar residues" evidence="3">
    <location>
        <begin position="464"/>
        <end position="473"/>
    </location>
</feature>
<name>TF7L1_XENTR</name>
<organism>
    <name type="scientific">Xenopus tropicalis</name>
    <name type="common">Western clawed frog</name>
    <name type="synonym">Silurana tropicalis</name>
    <dbReference type="NCBI Taxonomy" id="8364"/>
    <lineage>
        <taxon>Eukaryota</taxon>
        <taxon>Metazoa</taxon>
        <taxon>Chordata</taxon>
        <taxon>Craniata</taxon>
        <taxon>Vertebrata</taxon>
        <taxon>Euteleostomi</taxon>
        <taxon>Amphibia</taxon>
        <taxon>Batrachia</taxon>
        <taxon>Anura</taxon>
        <taxon>Pipoidea</taxon>
        <taxon>Pipidae</taxon>
        <taxon>Xenopodinae</taxon>
        <taxon>Xenopus</taxon>
        <taxon>Silurana</taxon>
    </lineage>
</organism>
<proteinExistence type="evidence at transcript level"/>
<evidence type="ECO:0000250" key="1"/>
<evidence type="ECO:0000255" key="2">
    <source>
        <dbReference type="PROSITE-ProRule" id="PRU00267"/>
    </source>
</evidence>
<evidence type="ECO:0000256" key="3">
    <source>
        <dbReference type="SAM" id="MobiDB-lite"/>
    </source>
</evidence>
<evidence type="ECO:0000305" key="4"/>
<comment type="function">
    <text evidence="1">Participates in the Wnt signaling pathway. Binds to DNA and acts as a repressor in the absence of ctnnb1, and as an activator in its presence. Required early in development for the establishment of the dorsal body axis in response to maternal Wnt signaling (By similarity).</text>
</comment>
<comment type="subunit">
    <text evidence="1">Interacts with csnk1e, ctnnb1, ctbp, dact1 and gsk3b. May interact with ase and tle4 (By similarity).</text>
</comment>
<comment type="subcellular location">
    <subcellularLocation>
        <location evidence="2">Nucleus</location>
    </subcellularLocation>
</comment>
<comment type="PTM">
    <text evidence="1">Phosphorylated. Phosphorylation by csnk1e promotes binding to ctnnb1 while phosphorylation by gsk3b may reverse this effect (By similarity).</text>
</comment>
<comment type="similarity">
    <text evidence="4">Belongs to the TCF/LEF family.</text>
</comment>
<sequence length="553" mass="60081">MPQLNSGGGDELGANDELIRFKDEGEQEEKSPGEGSAEGDLADVKSSLVNESENHSSDSDSEVERRPPPRETFEKPRDYLSEAFRRQQDAAFFKGPPYAGYPFLMIPDLGGHYLPNGALSPSARTYLQMKWPLLDSPSTAGLKDARSPSPAHLSNKVPVVQHPHHMHPLTPLITYSNEHFSPGTPPGHLSPEIDPKTGIPRPPHPSELSPYYPLSPGAVGQIPHPLGWLVPQQGQPMYSIPPGGFRHPYPALAMNASMSSLVSSRFSPHMVPPPHHGLHTSGIPHPAIVSPIVKQEPSSGNISPNLITKPSVVVKKEEEKKPHIKKPLNAFMLYMKEMRAKVVAECTLKESAAINQILGRRWHSLSREEQAKYYELARKERQLHSQLYPTWSARDNYGKRKKRKRDKQSPEMEITKTKKMCVQHLPADKSCDSPASSHGSMLDSPATPSAALASPAAPAATHSEQAQPLSLTTKPEARAQLSLSHSAAFLASKSPPSSSLSGSLSSPVGSPLLSRPIPLTSSILSPPCVFPSALQALPLLQAQPLSLVTKSSD</sequence>